<reference key="1">
    <citation type="journal article" date="1997" name="Science">
        <title>The complete genome sequence of Escherichia coli K-12.</title>
        <authorList>
            <person name="Blattner F.R."/>
            <person name="Plunkett G. III"/>
            <person name="Bloch C.A."/>
            <person name="Perna N.T."/>
            <person name="Burland V."/>
            <person name="Riley M."/>
            <person name="Collado-Vides J."/>
            <person name="Glasner J.D."/>
            <person name="Rode C.K."/>
            <person name="Mayhew G.F."/>
            <person name="Gregor J."/>
            <person name="Davis N.W."/>
            <person name="Kirkpatrick H.A."/>
            <person name="Goeden M.A."/>
            <person name="Rose D.J."/>
            <person name="Mau B."/>
            <person name="Shao Y."/>
        </authorList>
    </citation>
    <scope>NUCLEOTIDE SEQUENCE [LARGE SCALE GENOMIC DNA]</scope>
    <source>
        <strain>K12 / MG1655 / ATCC 47076</strain>
    </source>
</reference>
<reference key="2">
    <citation type="journal article" date="2006" name="Mol. Syst. Biol.">
        <title>Highly accurate genome sequences of Escherichia coli K-12 strains MG1655 and W3110.</title>
        <authorList>
            <person name="Hayashi K."/>
            <person name="Morooka N."/>
            <person name="Yamamoto Y."/>
            <person name="Fujita K."/>
            <person name="Isono K."/>
            <person name="Choi S."/>
            <person name="Ohtsubo E."/>
            <person name="Baba T."/>
            <person name="Wanner B.L."/>
            <person name="Mori H."/>
            <person name="Horiuchi T."/>
        </authorList>
    </citation>
    <scope>NUCLEOTIDE SEQUENCE [LARGE SCALE GENOMIC DNA]</scope>
    <source>
        <strain>K12 / W3110 / ATCC 27325 / DSM 5911</strain>
    </source>
</reference>
<organism>
    <name type="scientific">Escherichia coli (strain K12)</name>
    <dbReference type="NCBI Taxonomy" id="83333"/>
    <lineage>
        <taxon>Bacteria</taxon>
        <taxon>Pseudomonadati</taxon>
        <taxon>Pseudomonadota</taxon>
        <taxon>Gammaproteobacteria</taxon>
        <taxon>Enterobacterales</taxon>
        <taxon>Enterobacteriaceae</taxon>
        <taxon>Escherichia</taxon>
    </lineage>
</organism>
<proteinExistence type="predicted"/>
<feature type="chain" id="PRO_0000168844" description="Uncharacterized protein YmfJ">
    <location>
        <begin position="1"/>
        <end position="102"/>
    </location>
</feature>
<name>YMFJ_ECOLI</name>
<keyword id="KW-1185">Reference proteome</keyword>
<dbReference type="EMBL" id="U00096">
    <property type="protein sequence ID" value="AAC74228.2"/>
    <property type="molecule type" value="Genomic_DNA"/>
</dbReference>
<dbReference type="EMBL" id="AP009048">
    <property type="protein sequence ID" value="BAE76379.1"/>
    <property type="molecule type" value="Genomic_DNA"/>
</dbReference>
<dbReference type="PIR" id="E64859">
    <property type="entry name" value="E64859"/>
</dbReference>
<dbReference type="RefSeq" id="NP_415662.2">
    <property type="nucleotide sequence ID" value="NC_000913.3"/>
</dbReference>
<dbReference type="RefSeq" id="WP_001005353.1">
    <property type="nucleotide sequence ID" value="NZ_CP064683.1"/>
</dbReference>
<dbReference type="SMR" id="P75973"/>
<dbReference type="BioGRID" id="4262849">
    <property type="interactions" value="9"/>
</dbReference>
<dbReference type="BioGRID" id="850088">
    <property type="interactions" value="2"/>
</dbReference>
<dbReference type="FunCoup" id="P75973">
    <property type="interactions" value="59"/>
</dbReference>
<dbReference type="IntAct" id="P75973">
    <property type="interactions" value="5"/>
</dbReference>
<dbReference type="STRING" id="511145.b1144"/>
<dbReference type="PaxDb" id="511145-b1144"/>
<dbReference type="EnsemblBacteria" id="AAC74228">
    <property type="protein sequence ID" value="AAC74228"/>
    <property type="gene ID" value="b1144"/>
</dbReference>
<dbReference type="GeneID" id="945718"/>
<dbReference type="KEGG" id="ecj:JW1130"/>
<dbReference type="KEGG" id="eco:b1144"/>
<dbReference type="PATRIC" id="fig|83333.103.peg.1932"/>
<dbReference type="eggNOG" id="ENOG502ZG0E">
    <property type="taxonomic scope" value="Bacteria"/>
</dbReference>
<dbReference type="HOGENOM" id="CLU_1978055_0_0_6"/>
<dbReference type="InParanoid" id="P75973"/>
<dbReference type="BioCyc" id="EcoCyc:G6588-MONOMER"/>
<dbReference type="PRO" id="PR:P75973"/>
<dbReference type="Proteomes" id="UP000000625">
    <property type="component" value="Chromosome"/>
</dbReference>
<dbReference type="GO" id="GO:0005829">
    <property type="term" value="C:cytosol"/>
    <property type="evidence" value="ECO:0000314"/>
    <property type="project" value="EcoCyc"/>
</dbReference>
<protein>
    <recommendedName>
        <fullName>Uncharacterized protein YmfJ</fullName>
    </recommendedName>
</protein>
<accession>P75973</accession>
<accession>Q2MBH7</accession>
<gene>
    <name type="primary">ymfJ</name>
    <name type="ordered locus">b1144</name>
    <name type="ordered locus">JW1130</name>
</gene>
<sequence length="102" mass="11458">MNEQNLKHVIALLLEDAKRLQQIEPNAGTEARILLAKQALKTCGAQAPGRTEFMNFMANTLTPLPCNGEKVSRVYHDTMVKALRIELDGLRRKIVMNEIVTN</sequence>